<comment type="function">
    <text evidence="1">Catalyzes the attachment of glutamate to tRNA(Glu) in a two-step reaction: glutamate is first activated by ATP to form Glu-AMP and then transferred to the acceptor end of tRNA(Glu).</text>
</comment>
<comment type="catalytic activity">
    <reaction evidence="1">
        <text>tRNA(Glu) + L-glutamate + ATP = L-glutamyl-tRNA(Glu) + AMP + diphosphate</text>
        <dbReference type="Rhea" id="RHEA:23540"/>
        <dbReference type="Rhea" id="RHEA-COMP:9663"/>
        <dbReference type="Rhea" id="RHEA-COMP:9680"/>
        <dbReference type="ChEBI" id="CHEBI:29985"/>
        <dbReference type="ChEBI" id="CHEBI:30616"/>
        <dbReference type="ChEBI" id="CHEBI:33019"/>
        <dbReference type="ChEBI" id="CHEBI:78442"/>
        <dbReference type="ChEBI" id="CHEBI:78520"/>
        <dbReference type="ChEBI" id="CHEBI:456215"/>
        <dbReference type="EC" id="6.1.1.17"/>
    </reaction>
</comment>
<comment type="subunit">
    <text evidence="1">Monomer.</text>
</comment>
<comment type="subcellular location">
    <subcellularLocation>
        <location evidence="1">Cytoplasm</location>
    </subcellularLocation>
</comment>
<comment type="similarity">
    <text evidence="1">Belongs to the class-I aminoacyl-tRNA synthetase family. Glutamate--tRNA ligase type 1 subfamily.</text>
</comment>
<name>SYE2_BRUSI</name>
<organism>
    <name type="scientific">Brucella suis (strain ATCC 23445 / NCTC 10510)</name>
    <dbReference type="NCBI Taxonomy" id="470137"/>
    <lineage>
        <taxon>Bacteria</taxon>
        <taxon>Pseudomonadati</taxon>
        <taxon>Pseudomonadota</taxon>
        <taxon>Alphaproteobacteria</taxon>
        <taxon>Hyphomicrobiales</taxon>
        <taxon>Brucellaceae</taxon>
        <taxon>Brucella/Ochrobactrum group</taxon>
        <taxon>Brucella</taxon>
    </lineage>
</organism>
<keyword id="KW-0030">Aminoacyl-tRNA synthetase</keyword>
<keyword id="KW-0067">ATP-binding</keyword>
<keyword id="KW-0963">Cytoplasm</keyword>
<keyword id="KW-0436">Ligase</keyword>
<keyword id="KW-0547">Nucleotide-binding</keyword>
<keyword id="KW-0648">Protein biosynthesis</keyword>
<proteinExistence type="inferred from homology"/>
<accession>B0CGU5</accession>
<feature type="chain" id="PRO_0000367628" description="Glutamate--tRNA ligase 2">
    <location>
        <begin position="1"/>
        <end position="473"/>
    </location>
</feature>
<feature type="region of interest" description="Disordered" evidence="2">
    <location>
        <begin position="113"/>
        <end position="136"/>
    </location>
</feature>
<feature type="short sequence motif" description="'HIGH' region" evidence="1">
    <location>
        <begin position="11"/>
        <end position="21"/>
    </location>
</feature>
<feature type="short sequence motif" description="'KMSKS' region" evidence="1">
    <location>
        <begin position="240"/>
        <end position="244"/>
    </location>
</feature>
<feature type="compositionally biased region" description="Basic and acidic residues" evidence="2">
    <location>
        <begin position="113"/>
        <end position="133"/>
    </location>
</feature>
<feature type="binding site" evidence="1">
    <location>
        <position position="243"/>
    </location>
    <ligand>
        <name>ATP</name>
        <dbReference type="ChEBI" id="CHEBI:30616"/>
    </ligand>
</feature>
<gene>
    <name evidence="1" type="primary">gltX2</name>
    <name type="ordered locus">BSUIS_A1195</name>
</gene>
<evidence type="ECO:0000255" key="1">
    <source>
        <dbReference type="HAMAP-Rule" id="MF_00022"/>
    </source>
</evidence>
<evidence type="ECO:0000256" key="2">
    <source>
        <dbReference type="SAM" id="MobiDB-lite"/>
    </source>
</evidence>
<reference key="1">
    <citation type="submission" date="2007-12" db="EMBL/GenBank/DDBJ databases">
        <title>Brucella suis ATCC 23445 whole genome shotgun sequencing project.</title>
        <authorList>
            <person name="Setubal J.C."/>
            <person name="Bowns C."/>
            <person name="Boyle S."/>
            <person name="Crasta O.R."/>
            <person name="Czar M.J."/>
            <person name="Dharmanolla C."/>
            <person name="Gillespie J.J."/>
            <person name="Kenyon R.W."/>
            <person name="Lu J."/>
            <person name="Mane S."/>
            <person name="Mohapatra S."/>
            <person name="Nagrani S."/>
            <person name="Purkayastha A."/>
            <person name="Rajasimha H.K."/>
            <person name="Shallom J.M."/>
            <person name="Shallom S."/>
            <person name="Shukla M."/>
            <person name="Snyder E.E."/>
            <person name="Sobral B.W."/>
            <person name="Wattam A.R."/>
            <person name="Will R."/>
            <person name="Williams K."/>
            <person name="Yoo H."/>
            <person name="Bruce D."/>
            <person name="Detter C."/>
            <person name="Munk C."/>
            <person name="Brettin T.S."/>
        </authorList>
    </citation>
    <scope>NUCLEOTIDE SEQUENCE [LARGE SCALE GENOMIC DNA]</scope>
    <source>
        <strain>ATCC 23445 / NCTC 10510</strain>
    </source>
</reference>
<dbReference type="EC" id="6.1.1.17" evidence="1"/>
<dbReference type="EMBL" id="CP000911">
    <property type="protein sequence ID" value="ABY38246.1"/>
    <property type="molecule type" value="Genomic_DNA"/>
</dbReference>
<dbReference type="SMR" id="B0CGU5"/>
<dbReference type="KEGG" id="bmt:BSUIS_A1195"/>
<dbReference type="HOGENOM" id="CLU_015768_6_3_5"/>
<dbReference type="Proteomes" id="UP000008545">
    <property type="component" value="Chromosome I"/>
</dbReference>
<dbReference type="GO" id="GO:0005829">
    <property type="term" value="C:cytosol"/>
    <property type="evidence" value="ECO:0007669"/>
    <property type="project" value="TreeGrafter"/>
</dbReference>
<dbReference type="GO" id="GO:0005524">
    <property type="term" value="F:ATP binding"/>
    <property type="evidence" value="ECO:0007669"/>
    <property type="project" value="UniProtKB-UniRule"/>
</dbReference>
<dbReference type="GO" id="GO:0004818">
    <property type="term" value="F:glutamate-tRNA ligase activity"/>
    <property type="evidence" value="ECO:0007669"/>
    <property type="project" value="UniProtKB-UniRule"/>
</dbReference>
<dbReference type="GO" id="GO:0000049">
    <property type="term" value="F:tRNA binding"/>
    <property type="evidence" value="ECO:0007669"/>
    <property type="project" value="InterPro"/>
</dbReference>
<dbReference type="GO" id="GO:0008270">
    <property type="term" value="F:zinc ion binding"/>
    <property type="evidence" value="ECO:0007669"/>
    <property type="project" value="InterPro"/>
</dbReference>
<dbReference type="GO" id="GO:0006424">
    <property type="term" value="P:glutamyl-tRNA aminoacylation"/>
    <property type="evidence" value="ECO:0007669"/>
    <property type="project" value="UniProtKB-UniRule"/>
</dbReference>
<dbReference type="CDD" id="cd00808">
    <property type="entry name" value="GluRS_core"/>
    <property type="match status" value="1"/>
</dbReference>
<dbReference type="FunFam" id="3.40.50.620:FF:000007">
    <property type="entry name" value="Glutamate--tRNA ligase"/>
    <property type="match status" value="1"/>
</dbReference>
<dbReference type="Gene3D" id="1.10.10.350">
    <property type="match status" value="1"/>
</dbReference>
<dbReference type="Gene3D" id="3.40.50.620">
    <property type="entry name" value="HUPs"/>
    <property type="match status" value="1"/>
</dbReference>
<dbReference type="HAMAP" id="MF_00022">
    <property type="entry name" value="Glu_tRNA_synth_type1"/>
    <property type="match status" value="1"/>
</dbReference>
<dbReference type="InterPro" id="IPR045462">
    <property type="entry name" value="aa-tRNA-synth_I_cd-bd"/>
</dbReference>
<dbReference type="InterPro" id="IPR020751">
    <property type="entry name" value="aa-tRNA-synth_I_codon-bd_sub2"/>
</dbReference>
<dbReference type="InterPro" id="IPR001412">
    <property type="entry name" value="aa-tRNA-synth_I_CS"/>
</dbReference>
<dbReference type="InterPro" id="IPR008925">
    <property type="entry name" value="aa_tRNA-synth_I_cd-bd_sf"/>
</dbReference>
<dbReference type="InterPro" id="IPR004527">
    <property type="entry name" value="Glu-tRNA-ligase_bac/mito"/>
</dbReference>
<dbReference type="InterPro" id="IPR000924">
    <property type="entry name" value="Glu/Gln-tRNA-synth"/>
</dbReference>
<dbReference type="InterPro" id="IPR020058">
    <property type="entry name" value="Glu/Gln-tRNA-synth_Ib_cat-dom"/>
</dbReference>
<dbReference type="InterPro" id="IPR049940">
    <property type="entry name" value="GluQ/Sye"/>
</dbReference>
<dbReference type="InterPro" id="IPR033910">
    <property type="entry name" value="GluRS_core"/>
</dbReference>
<dbReference type="InterPro" id="IPR014729">
    <property type="entry name" value="Rossmann-like_a/b/a_fold"/>
</dbReference>
<dbReference type="NCBIfam" id="TIGR00464">
    <property type="entry name" value="gltX_bact"/>
    <property type="match status" value="1"/>
</dbReference>
<dbReference type="PANTHER" id="PTHR43311">
    <property type="entry name" value="GLUTAMATE--TRNA LIGASE"/>
    <property type="match status" value="1"/>
</dbReference>
<dbReference type="PANTHER" id="PTHR43311:SF2">
    <property type="entry name" value="GLUTAMATE--TRNA LIGASE, MITOCHONDRIAL-RELATED"/>
    <property type="match status" value="1"/>
</dbReference>
<dbReference type="Pfam" id="PF19269">
    <property type="entry name" value="Anticodon_2"/>
    <property type="match status" value="1"/>
</dbReference>
<dbReference type="Pfam" id="PF00749">
    <property type="entry name" value="tRNA-synt_1c"/>
    <property type="match status" value="1"/>
</dbReference>
<dbReference type="PRINTS" id="PR00987">
    <property type="entry name" value="TRNASYNTHGLU"/>
</dbReference>
<dbReference type="SUPFAM" id="SSF48163">
    <property type="entry name" value="An anticodon-binding domain of class I aminoacyl-tRNA synthetases"/>
    <property type="match status" value="1"/>
</dbReference>
<dbReference type="SUPFAM" id="SSF52374">
    <property type="entry name" value="Nucleotidylyl transferase"/>
    <property type="match status" value="1"/>
</dbReference>
<dbReference type="PROSITE" id="PS00178">
    <property type="entry name" value="AA_TRNA_LIGASE_I"/>
    <property type="match status" value="1"/>
</dbReference>
<sequence>MSKPVITRFAPSPTGYLHIGGARTALFNWLYAKHCGGKMLLRIEDTDRERSTEAATAAILDGLTWLGLDWDGEAISQFERAPRHREVAEELVANGKAYYCYASPEELEEMREKARAEGRPPRYDGRWRDRDPSEAPAGVKPVIRIKAPRDGETVVHDAVQGDVRFPNKDLDDFIILRSDGTPTYMHAVVVDDHDMGVTHIIRGDDHLTNAARQTIIYNAMGWDVPQMSHIPLIHGADGAKLSKRHGALGVDAYRAMGYLPAALRNYLVRLGWSHGDDEIMSTEQMIEWFDVKDINKGAARFDFQKLEAINGLYMRSSDDQALFDALVAVLPEIEGGKELAEALDDKGRAQLLLAMPGLKERAKTLVELADGAKFIFASRPLALDEKAASLLNDEGRAVLKPVYPVLEAVGEWTAESLDAAIRAHAEAEGLKLGKIAQPLRAALTGRATSPGVFDVLVVLGREESLARIGDQIG</sequence>
<protein>
    <recommendedName>
        <fullName evidence="1">Glutamate--tRNA ligase 2</fullName>
        <ecNumber evidence="1">6.1.1.17</ecNumber>
    </recommendedName>
    <alternativeName>
        <fullName evidence="1">Glutamyl-tRNA synthetase 2</fullName>
        <shortName evidence="1">GluRS 2</shortName>
    </alternativeName>
</protein>